<keyword id="KW-1015">Disulfide bond</keyword>
<keyword id="KW-0245">EGF-like domain</keyword>
<keyword id="KW-0325">Glycoprotein</keyword>
<keyword id="KW-0433">Leucine-rich repeat</keyword>
<keyword id="KW-0472">Membrane</keyword>
<keyword id="KW-1185">Reference proteome</keyword>
<keyword id="KW-0677">Repeat</keyword>
<keyword id="KW-0732">Signal</keyword>
<keyword id="KW-0812">Transmembrane</keyword>
<keyword id="KW-1133">Transmembrane helix</keyword>
<comment type="function">
    <text evidence="1">May act as an inhibitor of TGF-beta signaling.</text>
</comment>
<comment type="subcellular location">
    <subcellularLocation>
        <location evidence="5">Membrane</location>
        <topology evidence="5">Single-pass type I membrane protein</topology>
    </subcellularLocation>
</comment>
<reference key="1">
    <citation type="submission" date="2004-07" db="EMBL/GenBank/DDBJ databases">
        <authorList>
            <consortium name="NIH - Xenopus Gene Collection (XGC) project"/>
        </authorList>
    </citation>
    <scope>NUCLEOTIDE SEQUENCE [LARGE SCALE MRNA]</scope>
</reference>
<feature type="signal peptide" evidence="2">
    <location>
        <begin position="1"/>
        <end position="19"/>
    </location>
</feature>
<feature type="chain" id="PRO_0000232632" description="Vasorin">
    <location>
        <begin position="20"/>
        <end position="661"/>
    </location>
</feature>
<feature type="topological domain" description="Extracellular" evidence="2">
    <location>
        <begin position="20"/>
        <end position="563"/>
    </location>
</feature>
<feature type="transmembrane region" description="Helical" evidence="2">
    <location>
        <begin position="564"/>
        <end position="584"/>
    </location>
</feature>
<feature type="topological domain" description="Cytoplasmic" evidence="2">
    <location>
        <begin position="585"/>
        <end position="661"/>
    </location>
</feature>
<feature type="domain" description="LRRNT">
    <location>
        <begin position="20"/>
        <end position="50"/>
    </location>
</feature>
<feature type="repeat" description="LRR 1">
    <location>
        <begin position="52"/>
        <end position="72"/>
    </location>
</feature>
<feature type="repeat" description="LRR 2">
    <location>
        <begin position="75"/>
        <end position="96"/>
    </location>
</feature>
<feature type="repeat" description="LRR 3">
    <location>
        <begin position="99"/>
        <end position="120"/>
    </location>
</feature>
<feature type="repeat" description="LRR 4">
    <location>
        <begin position="123"/>
        <end position="144"/>
    </location>
</feature>
<feature type="repeat" description="LRR 5">
    <location>
        <begin position="147"/>
        <end position="168"/>
    </location>
</feature>
<feature type="repeat" description="LRR 6">
    <location>
        <begin position="169"/>
        <end position="189"/>
    </location>
</feature>
<feature type="repeat" description="LRR 7">
    <location>
        <begin position="191"/>
        <end position="212"/>
    </location>
</feature>
<feature type="repeat" description="LRR 8">
    <location>
        <begin position="215"/>
        <end position="237"/>
    </location>
</feature>
<feature type="repeat" description="LRR 9">
    <location>
        <begin position="238"/>
        <end position="258"/>
    </location>
</feature>
<feature type="repeat" description="LRR 10">
    <location>
        <begin position="259"/>
        <end position="281"/>
    </location>
</feature>
<feature type="domain" description="LRRCT">
    <location>
        <begin position="293"/>
        <end position="346"/>
    </location>
</feature>
<feature type="domain" description="EGF-like" evidence="3">
    <location>
        <begin position="403"/>
        <end position="440"/>
    </location>
</feature>
<feature type="domain" description="Fibronectin type-III">
    <location>
        <begin position="455"/>
        <end position="543"/>
    </location>
</feature>
<feature type="region of interest" description="Disordered" evidence="4">
    <location>
        <begin position="348"/>
        <end position="395"/>
    </location>
</feature>
<feature type="region of interest" description="Disordered" evidence="4">
    <location>
        <begin position="591"/>
        <end position="661"/>
    </location>
</feature>
<feature type="compositionally biased region" description="Low complexity" evidence="4">
    <location>
        <begin position="348"/>
        <end position="385"/>
    </location>
</feature>
<feature type="compositionally biased region" description="Basic and acidic residues" evidence="4">
    <location>
        <begin position="606"/>
        <end position="623"/>
    </location>
</feature>
<feature type="glycosylation site" description="N-linked (GlcNAc...) asparagine" evidence="2">
    <location>
        <position position="99"/>
    </location>
</feature>
<feature type="glycosylation site" description="N-linked (GlcNAc...) asparagine" evidence="2">
    <location>
        <position position="518"/>
    </location>
</feature>
<feature type="glycosylation site" description="N-linked (GlcNAc...) asparagine" evidence="2">
    <location>
        <position position="561"/>
    </location>
</feature>
<feature type="disulfide bond" evidence="3">
    <location>
        <begin position="407"/>
        <end position="418"/>
    </location>
</feature>
<feature type="disulfide bond" evidence="3">
    <location>
        <begin position="412"/>
        <end position="428"/>
    </location>
</feature>
<feature type="disulfide bond" evidence="3">
    <location>
        <begin position="430"/>
        <end position="439"/>
    </location>
</feature>
<evidence type="ECO:0000250" key="1"/>
<evidence type="ECO:0000255" key="2"/>
<evidence type="ECO:0000255" key="3">
    <source>
        <dbReference type="PROSITE-ProRule" id="PRU00076"/>
    </source>
</evidence>
<evidence type="ECO:0000256" key="4">
    <source>
        <dbReference type="SAM" id="MobiDB-lite"/>
    </source>
</evidence>
<evidence type="ECO:0000305" key="5"/>
<accession>Q6DF55</accession>
<organism>
    <name type="scientific">Xenopus tropicalis</name>
    <name type="common">Western clawed frog</name>
    <name type="synonym">Silurana tropicalis</name>
    <dbReference type="NCBI Taxonomy" id="8364"/>
    <lineage>
        <taxon>Eukaryota</taxon>
        <taxon>Metazoa</taxon>
        <taxon>Chordata</taxon>
        <taxon>Craniata</taxon>
        <taxon>Vertebrata</taxon>
        <taxon>Euteleostomi</taxon>
        <taxon>Amphibia</taxon>
        <taxon>Batrachia</taxon>
        <taxon>Anura</taxon>
        <taxon>Pipoidea</taxon>
        <taxon>Pipidae</taxon>
        <taxon>Xenopodinae</taxon>
        <taxon>Xenopus</taxon>
        <taxon>Silurana</taxon>
    </lineage>
</organism>
<sequence>MWHLLVWIILLATAQQMITEGCPAGCQCNTPQTVFCLARKNSNFPRSVPPDTLNLYVFENGISSIEESSFIGLNGLHLLDLSHNQLSSLPGGVFRNLANLSNLDLTSNQLTEISADTFQGLSRLERLYLNGNRIRSIHPEAFKGIESLLELKLSNNQLVTPPAFSLPHLLLLDLSYNAIPVIQQGVFNAGNIESLRLAGLGLKEVPEELLSGLKNLHELDLSDNQLDKVPPGLHGLTKLNIAGNVGFSQIQVDDLSNLPALQELDLSGLSLQTLPKGLFRSSKRLRAVSLAQNPFNCVCSLGWLSEWMRVSGVVLLRPDETRCHFPPKNAGKTLRQLRDSEYGCPAPTTIQMPSTMPPSTTTGPPTTTKHLQTEAPTTASTTTTTIPHQEQEEDTQPFQFDFEDTLCPPQTCLNGGSCHLDPTGQLECECPPGFQGTYCETGPVTPAVVTEMYIEQVKIIEVTVSSIRVDLQSYSQNKEKLRAIRLTVRNLYGADRRPMIYKLPPTLPEYTVRALSSNSSYWVCLGSQGEGGPEEDLCTETHTLGEPPKHSPQVTQSQEGNLTLVLVPAVAAGILLSAAVAAAACYARRRKGKGHSVEDGGPLEMDGVKKGLDGKGEVKKLSEDPTGPEKTGAESEEPLMDSTRIGNNNDAPTGRLPHSYF</sequence>
<protein>
    <recommendedName>
        <fullName>Vasorin</fullName>
    </recommendedName>
</protein>
<gene>
    <name type="primary">vasn</name>
</gene>
<dbReference type="EMBL" id="BC076888">
    <property type="protein sequence ID" value="AAH76888.1"/>
    <property type="molecule type" value="mRNA"/>
</dbReference>
<dbReference type="RefSeq" id="NP_001005036.1">
    <property type="nucleotide sequence ID" value="NM_001005036.1"/>
</dbReference>
<dbReference type="SMR" id="Q6DF55"/>
<dbReference type="FunCoup" id="Q6DF55">
    <property type="interactions" value="161"/>
</dbReference>
<dbReference type="STRING" id="8364.ENSXETP00000006139"/>
<dbReference type="GlyCosmos" id="Q6DF55">
    <property type="glycosylation" value="3 sites, No reported glycans"/>
</dbReference>
<dbReference type="PaxDb" id="8364-ENSXETP00000037686"/>
<dbReference type="GeneID" id="448556"/>
<dbReference type="KEGG" id="xtr:448556"/>
<dbReference type="AGR" id="Xenbase:XB-GENE-941552"/>
<dbReference type="CTD" id="114990"/>
<dbReference type="Xenbase" id="XB-GENE-941552">
    <property type="gene designation" value="vasn"/>
</dbReference>
<dbReference type="eggNOG" id="KOG0619">
    <property type="taxonomic scope" value="Eukaryota"/>
</dbReference>
<dbReference type="HOGENOM" id="CLU_432517_0_0_1"/>
<dbReference type="InParanoid" id="Q6DF55"/>
<dbReference type="OMA" id="VPQPQDC"/>
<dbReference type="OrthoDB" id="676979at2759"/>
<dbReference type="PhylomeDB" id="Q6DF55"/>
<dbReference type="TreeFam" id="TF351825"/>
<dbReference type="Proteomes" id="UP000008143">
    <property type="component" value="Chromosome 9"/>
</dbReference>
<dbReference type="Bgee" id="ENSXETG00000017309">
    <property type="expression patterns" value="Expressed in liver and 15 other cell types or tissues"/>
</dbReference>
<dbReference type="ExpressionAtlas" id="Q6DF55">
    <property type="expression patterns" value="baseline"/>
</dbReference>
<dbReference type="GO" id="GO:0016020">
    <property type="term" value="C:membrane"/>
    <property type="evidence" value="ECO:0007669"/>
    <property type="project" value="UniProtKB-SubCell"/>
</dbReference>
<dbReference type="CDD" id="cd00054">
    <property type="entry name" value="EGF_CA"/>
    <property type="match status" value="1"/>
</dbReference>
<dbReference type="FunFam" id="2.10.25.10:FF:001286">
    <property type="entry name" value="Vasorin"/>
    <property type="match status" value="1"/>
</dbReference>
<dbReference type="FunFam" id="3.80.10.10:FF:000211">
    <property type="entry name" value="vasorin"/>
    <property type="match status" value="1"/>
</dbReference>
<dbReference type="FunFam" id="3.80.10.10:FF:000250">
    <property type="entry name" value="vasorin"/>
    <property type="match status" value="1"/>
</dbReference>
<dbReference type="Gene3D" id="2.10.25.10">
    <property type="entry name" value="Laminin"/>
    <property type="match status" value="1"/>
</dbReference>
<dbReference type="Gene3D" id="3.80.10.10">
    <property type="entry name" value="Ribonuclease Inhibitor"/>
    <property type="match status" value="2"/>
</dbReference>
<dbReference type="InterPro" id="IPR000483">
    <property type="entry name" value="Cys-rich_flank_reg_C"/>
</dbReference>
<dbReference type="InterPro" id="IPR000742">
    <property type="entry name" value="EGF-like_dom"/>
</dbReference>
<dbReference type="InterPro" id="IPR001611">
    <property type="entry name" value="Leu-rich_rpt"/>
</dbReference>
<dbReference type="InterPro" id="IPR003591">
    <property type="entry name" value="Leu-rich_rpt_typical-subtyp"/>
</dbReference>
<dbReference type="InterPro" id="IPR032675">
    <property type="entry name" value="LRR_dom_sf"/>
</dbReference>
<dbReference type="InterPro" id="IPR050541">
    <property type="entry name" value="LRR_TM_domain-containing"/>
</dbReference>
<dbReference type="PANTHER" id="PTHR24369">
    <property type="entry name" value="ANTIGEN BSP, PUTATIVE-RELATED"/>
    <property type="match status" value="1"/>
</dbReference>
<dbReference type="PANTHER" id="PTHR24369:SF160">
    <property type="entry name" value="VASORIN"/>
    <property type="match status" value="1"/>
</dbReference>
<dbReference type="Pfam" id="PF00560">
    <property type="entry name" value="LRR_1"/>
    <property type="match status" value="2"/>
</dbReference>
<dbReference type="Pfam" id="PF13855">
    <property type="entry name" value="LRR_8"/>
    <property type="match status" value="1"/>
</dbReference>
<dbReference type="PRINTS" id="PR00019">
    <property type="entry name" value="LEURICHRPT"/>
</dbReference>
<dbReference type="SMART" id="SM00181">
    <property type="entry name" value="EGF"/>
    <property type="match status" value="1"/>
</dbReference>
<dbReference type="SMART" id="SM00365">
    <property type="entry name" value="LRR_SD22"/>
    <property type="match status" value="4"/>
</dbReference>
<dbReference type="SMART" id="SM00369">
    <property type="entry name" value="LRR_TYP"/>
    <property type="match status" value="6"/>
</dbReference>
<dbReference type="SMART" id="SM00082">
    <property type="entry name" value="LRRCT"/>
    <property type="match status" value="1"/>
</dbReference>
<dbReference type="SUPFAM" id="SSF57196">
    <property type="entry name" value="EGF/Laminin"/>
    <property type="match status" value="1"/>
</dbReference>
<dbReference type="SUPFAM" id="SSF52058">
    <property type="entry name" value="L domain-like"/>
    <property type="match status" value="1"/>
</dbReference>
<dbReference type="PROSITE" id="PS00022">
    <property type="entry name" value="EGF_1"/>
    <property type="match status" value="1"/>
</dbReference>
<dbReference type="PROSITE" id="PS01186">
    <property type="entry name" value="EGF_2"/>
    <property type="match status" value="1"/>
</dbReference>
<dbReference type="PROSITE" id="PS50026">
    <property type="entry name" value="EGF_3"/>
    <property type="match status" value="1"/>
</dbReference>
<dbReference type="PROSITE" id="PS51450">
    <property type="entry name" value="LRR"/>
    <property type="match status" value="9"/>
</dbReference>
<proteinExistence type="evidence at transcript level"/>
<name>VASN_XENTR</name>